<name>CCME_RHIE6</name>
<reference key="1">
    <citation type="journal article" date="2010" name="Appl. Environ. Microbiol.">
        <title>Conserved symbiotic plasmid DNA sequences in the multireplicon pangenomic structure of Rhizobium etli.</title>
        <authorList>
            <person name="Gonzalez V."/>
            <person name="Acosta J.L."/>
            <person name="Santamaria R.I."/>
            <person name="Bustos P."/>
            <person name="Fernandez J.L."/>
            <person name="Hernandez Gonzalez I.L."/>
            <person name="Diaz R."/>
            <person name="Flores M."/>
            <person name="Palacios R."/>
            <person name="Mora J."/>
            <person name="Davila G."/>
        </authorList>
    </citation>
    <scope>NUCLEOTIDE SEQUENCE [LARGE SCALE GENOMIC DNA]</scope>
    <source>
        <strain>CIAT 652</strain>
    </source>
</reference>
<keyword id="KW-0997">Cell inner membrane</keyword>
<keyword id="KW-1003">Cell membrane</keyword>
<keyword id="KW-0201">Cytochrome c-type biogenesis</keyword>
<keyword id="KW-0349">Heme</keyword>
<keyword id="KW-0408">Iron</keyword>
<keyword id="KW-0472">Membrane</keyword>
<keyword id="KW-0479">Metal-binding</keyword>
<keyword id="KW-0735">Signal-anchor</keyword>
<keyword id="KW-0812">Transmembrane</keyword>
<keyword id="KW-1133">Transmembrane helix</keyword>
<organism>
    <name type="scientific">Rhizobium etli (strain CIAT 652)</name>
    <dbReference type="NCBI Taxonomy" id="491916"/>
    <lineage>
        <taxon>Bacteria</taxon>
        <taxon>Pseudomonadati</taxon>
        <taxon>Pseudomonadota</taxon>
        <taxon>Alphaproteobacteria</taxon>
        <taxon>Hyphomicrobiales</taxon>
        <taxon>Rhizobiaceae</taxon>
        <taxon>Rhizobium/Agrobacterium group</taxon>
        <taxon>Rhizobium</taxon>
    </lineage>
</organism>
<sequence length="165" mass="17339">MTRKQKRLAVIAGGMGFIIAAVLLVMFAFSQSVAYFYMPADLAKTPVAPETRIRLGGLVGAGSVVRGAGSTVEFTVTDGSANAVKVHYTGILPDLFREGQGVVTEGMFASAGNVFIADTVLAKHDETYMPKEVADKLKAQGLWQDGQGAQSQAGQGQGQEAKATR</sequence>
<protein>
    <recommendedName>
        <fullName evidence="1">Cytochrome c-type biogenesis protein CcmE</fullName>
    </recommendedName>
    <alternativeName>
        <fullName evidence="1">Cytochrome c maturation protein E</fullName>
    </alternativeName>
    <alternativeName>
        <fullName evidence="1">Heme chaperone CcmE</fullName>
    </alternativeName>
</protein>
<comment type="function">
    <text evidence="1">Heme chaperone required for the biogenesis of c-type cytochromes. Transiently binds heme delivered by CcmC and transfers the heme to apo-cytochromes in a process facilitated by CcmF and CcmH.</text>
</comment>
<comment type="subcellular location">
    <subcellularLocation>
        <location evidence="1">Cell inner membrane</location>
        <topology evidence="1">Single-pass type II membrane protein</topology>
        <orientation evidence="1">Periplasmic side</orientation>
    </subcellularLocation>
</comment>
<comment type="similarity">
    <text evidence="1">Belongs to the CcmE/CycJ family.</text>
</comment>
<proteinExistence type="inferred from homology"/>
<evidence type="ECO:0000255" key="1">
    <source>
        <dbReference type="HAMAP-Rule" id="MF_01959"/>
    </source>
</evidence>
<evidence type="ECO:0000256" key="2">
    <source>
        <dbReference type="SAM" id="MobiDB-lite"/>
    </source>
</evidence>
<dbReference type="EMBL" id="CP001074">
    <property type="protein sequence ID" value="ACE90365.1"/>
    <property type="molecule type" value="Genomic_DNA"/>
</dbReference>
<dbReference type="SMR" id="B3PU61"/>
<dbReference type="KEGG" id="rec:RHECIAT_CH0001385"/>
<dbReference type="eggNOG" id="COG2332">
    <property type="taxonomic scope" value="Bacteria"/>
</dbReference>
<dbReference type="HOGENOM" id="CLU_079503_1_1_5"/>
<dbReference type="Proteomes" id="UP000008817">
    <property type="component" value="Chromosome"/>
</dbReference>
<dbReference type="GO" id="GO:0005886">
    <property type="term" value="C:plasma membrane"/>
    <property type="evidence" value="ECO:0007669"/>
    <property type="project" value="UniProtKB-SubCell"/>
</dbReference>
<dbReference type="GO" id="GO:0020037">
    <property type="term" value="F:heme binding"/>
    <property type="evidence" value="ECO:0007669"/>
    <property type="project" value="InterPro"/>
</dbReference>
<dbReference type="GO" id="GO:0046872">
    <property type="term" value="F:metal ion binding"/>
    <property type="evidence" value="ECO:0007669"/>
    <property type="project" value="UniProtKB-KW"/>
</dbReference>
<dbReference type="GO" id="GO:0017004">
    <property type="term" value="P:cytochrome complex assembly"/>
    <property type="evidence" value="ECO:0007669"/>
    <property type="project" value="UniProtKB-KW"/>
</dbReference>
<dbReference type="Gene3D" id="2.40.50.140">
    <property type="entry name" value="Nucleic acid-binding proteins"/>
    <property type="match status" value="1"/>
</dbReference>
<dbReference type="HAMAP" id="MF_01959">
    <property type="entry name" value="CcmE"/>
    <property type="match status" value="1"/>
</dbReference>
<dbReference type="InterPro" id="IPR004329">
    <property type="entry name" value="CcmE"/>
</dbReference>
<dbReference type="InterPro" id="IPR036127">
    <property type="entry name" value="CcmE-like_sf"/>
</dbReference>
<dbReference type="InterPro" id="IPR012340">
    <property type="entry name" value="NA-bd_OB-fold"/>
</dbReference>
<dbReference type="NCBIfam" id="NF009727">
    <property type="entry name" value="PRK13254.1-1"/>
    <property type="match status" value="1"/>
</dbReference>
<dbReference type="NCBIfam" id="NF009731">
    <property type="entry name" value="PRK13254.1-5"/>
    <property type="match status" value="1"/>
</dbReference>
<dbReference type="PANTHER" id="PTHR34128">
    <property type="entry name" value="CYTOCHROME C-TYPE BIOGENESIS PROTEIN CCME HOMOLOG, MITOCHONDRIAL"/>
    <property type="match status" value="1"/>
</dbReference>
<dbReference type="PANTHER" id="PTHR34128:SF2">
    <property type="entry name" value="CYTOCHROME C-TYPE BIOGENESIS PROTEIN CCME HOMOLOG, MITOCHONDRIAL"/>
    <property type="match status" value="1"/>
</dbReference>
<dbReference type="Pfam" id="PF03100">
    <property type="entry name" value="CcmE"/>
    <property type="match status" value="1"/>
</dbReference>
<dbReference type="SUPFAM" id="SSF82093">
    <property type="entry name" value="Heme chaperone CcmE"/>
    <property type="match status" value="1"/>
</dbReference>
<feature type="chain" id="PRO_1000189044" description="Cytochrome c-type biogenesis protein CcmE">
    <location>
        <begin position="1"/>
        <end position="165"/>
    </location>
</feature>
<feature type="topological domain" description="Cytoplasmic" evidence="1">
    <location>
        <begin position="1"/>
        <end position="7"/>
    </location>
</feature>
<feature type="transmembrane region" description="Helical; Signal-anchor for type II membrane protein" evidence="1">
    <location>
        <begin position="8"/>
        <end position="28"/>
    </location>
</feature>
<feature type="topological domain" description="Periplasmic" evidence="1">
    <location>
        <begin position="29"/>
        <end position="165"/>
    </location>
</feature>
<feature type="region of interest" description="Disordered" evidence="2">
    <location>
        <begin position="144"/>
        <end position="165"/>
    </location>
</feature>
<feature type="compositionally biased region" description="Low complexity" evidence="2">
    <location>
        <begin position="144"/>
        <end position="154"/>
    </location>
</feature>
<feature type="binding site" description="covalent" evidence="1">
    <location>
        <position position="124"/>
    </location>
    <ligand>
        <name>heme</name>
        <dbReference type="ChEBI" id="CHEBI:30413"/>
    </ligand>
</feature>
<feature type="binding site" description="axial binding residue" evidence="1">
    <location>
        <position position="128"/>
    </location>
    <ligand>
        <name>heme</name>
        <dbReference type="ChEBI" id="CHEBI:30413"/>
    </ligand>
    <ligandPart>
        <name>Fe</name>
        <dbReference type="ChEBI" id="CHEBI:18248"/>
    </ligandPart>
</feature>
<accession>B3PU61</accession>
<gene>
    <name evidence="1" type="primary">ccmE</name>
    <name evidence="1" type="synonym">cycJ</name>
    <name type="ordered locus">RHECIAT_CH0001385</name>
</gene>